<sequence length="366" mass="41336">MQVMRTFNQPPTSSHPTPTLNDSDTCITLYNHRGYARVLMPLFYCIVFFVGLLGNALAFHIIRPNVKKINSTTLYSANLVISDILFTLSLPLRIIYYALGFHWPLGETLCKIVGLIFYINTYAGVNFMTCLSVDRFIAVVLPLRFARFRKVSNVRYICVGVWLLVLMQTLPLLSMPMTNEEPDGFITCMEYPNFEPVPNISYILIGAVFLGYGVPVVTILVCYSILCCKLRLAAKANQLTDKSGRSQKAIGVICCVSLVFVVCFSPYHIDLLQYMIRKLIYTPDCAELTAFQISLHFTVCLMNLNSCLDPFIYFFACKGYKTKVLKILKRQVSVSFSSAARTLPEGLSRDISDGNKIHLNSTRHKE</sequence>
<keyword id="KW-1064">Adaptive immunity</keyword>
<keyword id="KW-1003">Cell membrane</keyword>
<keyword id="KW-1015">Disulfide bond</keyword>
<keyword id="KW-0297">G-protein coupled receptor</keyword>
<keyword id="KW-0325">Glycoprotein</keyword>
<keyword id="KW-0391">Immunity</keyword>
<keyword id="KW-0472">Membrane</keyword>
<keyword id="KW-0675">Receptor</keyword>
<keyword id="KW-1185">Reference proteome</keyword>
<keyword id="KW-0807">Transducer</keyword>
<keyword id="KW-0812">Transmembrane</keyword>
<keyword id="KW-1133">Transmembrane helix</keyword>
<name>GP183_SALSA</name>
<reference key="1">
    <citation type="journal article" date="2010" name="BMC Genomics">
        <title>Salmo salar and Esox lucius full-length cDNA sequences reveal changes in evolutionary pressures on a post-tetraploidization genome.</title>
        <authorList>
            <person name="Leong J.S."/>
            <person name="Jantzen S.G."/>
            <person name="von Schalburg K.R."/>
            <person name="Cooper G.A."/>
            <person name="Messmer A.M."/>
            <person name="Liao N.Y."/>
            <person name="Munro S."/>
            <person name="Moore R."/>
            <person name="Holt R.A."/>
            <person name="Jones S.J."/>
            <person name="Davidson W.S."/>
            <person name="Koop B.F."/>
        </authorList>
    </citation>
    <scope>NUCLEOTIDE SEQUENCE [LARGE SCALE MRNA]</scope>
    <source>
        <tissue>Brain</tissue>
    </source>
</reference>
<proteinExistence type="evidence at transcript level"/>
<evidence type="ECO:0000250" key="1">
    <source>
        <dbReference type="UniProtKB" id="P32249"/>
    </source>
</evidence>
<evidence type="ECO:0000250" key="2">
    <source>
        <dbReference type="UniProtKB" id="Q3U6B2"/>
    </source>
</evidence>
<evidence type="ECO:0000255" key="3"/>
<evidence type="ECO:0000255" key="4">
    <source>
        <dbReference type="PROSITE-ProRule" id="PRU00521"/>
    </source>
</evidence>
<accession>B5X337</accession>
<feature type="chain" id="PRO_0000383158" description="G-protein coupled receptor 183">
    <location>
        <begin position="1"/>
        <end position="366"/>
    </location>
</feature>
<feature type="topological domain" description="Extracellular" evidence="3">
    <location>
        <begin position="1"/>
        <end position="37"/>
    </location>
</feature>
<feature type="transmembrane region" description="Helical; Name=1" evidence="3">
    <location>
        <begin position="38"/>
        <end position="63"/>
    </location>
</feature>
<feature type="topological domain" description="Cytoplasmic" evidence="3">
    <location>
        <begin position="64"/>
        <end position="83"/>
    </location>
</feature>
<feature type="transmembrane region" description="Helical; Name=2" evidence="3">
    <location>
        <begin position="84"/>
        <end position="101"/>
    </location>
</feature>
<feature type="topological domain" description="Extracellular" evidence="3">
    <location>
        <begin position="102"/>
        <end position="111"/>
    </location>
</feature>
<feature type="transmembrane region" description="Helical; Name=3" evidence="3">
    <location>
        <begin position="112"/>
        <end position="133"/>
    </location>
</feature>
<feature type="topological domain" description="Cytoplasmic" evidence="3">
    <location>
        <begin position="134"/>
        <end position="155"/>
    </location>
</feature>
<feature type="transmembrane region" description="Helical; Name=4" evidence="3">
    <location>
        <begin position="156"/>
        <end position="174"/>
    </location>
</feature>
<feature type="topological domain" description="Extracellular" evidence="3">
    <location>
        <begin position="175"/>
        <end position="199"/>
    </location>
</feature>
<feature type="transmembrane region" description="Helical; Name=5" evidence="3">
    <location>
        <begin position="200"/>
        <end position="222"/>
    </location>
</feature>
<feature type="topological domain" description="Cytoplasmic" evidence="3">
    <location>
        <begin position="223"/>
        <end position="248"/>
    </location>
</feature>
<feature type="transmembrane region" description="Helical; Name=6" evidence="3">
    <location>
        <begin position="249"/>
        <end position="272"/>
    </location>
</feature>
<feature type="topological domain" description="Extracellular" evidence="3">
    <location>
        <begin position="273"/>
        <end position="292"/>
    </location>
</feature>
<feature type="transmembrane region" description="Helical; Name=7" evidence="3">
    <location>
        <begin position="293"/>
        <end position="317"/>
    </location>
</feature>
<feature type="topological domain" description="Cytoplasmic" evidence="3">
    <location>
        <begin position="318"/>
        <end position="366"/>
    </location>
</feature>
<feature type="glycosylation site" description="N-linked (GlcNAc...) asparagine" evidence="3">
    <location>
        <position position="21"/>
    </location>
</feature>
<feature type="disulfide bond" evidence="4">
    <location>
        <begin position="110"/>
        <end position="188"/>
    </location>
</feature>
<comment type="function">
    <text evidence="1 2">G-protein coupled receptor expressed in lymphocytes that acts as a chemotactic receptor for B-cells, T-cells, splenic dendritic cells, monocytes/macrophages and astrocytes (By similarity). Receptor for oxysterol 7-alpha,25-dihydroxycholesterol (7-alpha,25-OHC) and other related oxysterols (By similarity). Mediates cell positioning and movement of a number of cells by binding the 7-alpha,25-OHC ligand that forms a chemotactic gradient (By similarity). Binding of 7-alpha,25-OHC mediates the correct localization of B-cells during humoral immune responses (By similarity).</text>
</comment>
<comment type="subcellular location">
    <subcellularLocation>
        <location evidence="1">Cell membrane</location>
        <topology evidence="3">Multi-pass membrane protein</topology>
    </subcellularLocation>
</comment>
<comment type="similarity">
    <text evidence="4">Belongs to the G-protein coupled receptor 1 family.</text>
</comment>
<organism>
    <name type="scientific">Salmo salar</name>
    <name type="common">Atlantic salmon</name>
    <dbReference type="NCBI Taxonomy" id="8030"/>
    <lineage>
        <taxon>Eukaryota</taxon>
        <taxon>Metazoa</taxon>
        <taxon>Chordata</taxon>
        <taxon>Craniata</taxon>
        <taxon>Vertebrata</taxon>
        <taxon>Euteleostomi</taxon>
        <taxon>Actinopterygii</taxon>
        <taxon>Neopterygii</taxon>
        <taxon>Teleostei</taxon>
        <taxon>Protacanthopterygii</taxon>
        <taxon>Salmoniformes</taxon>
        <taxon>Salmonidae</taxon>
        <taxon>Salmoninae</taxon>
        <taxon>Salmo</taxon>
    </lineage>
</organism>
<gene>
    <name type="primary">gpr183</name>
</gene>
<dbReference type="EMBL" id="BT045456">
    <property type="protein sequence ID" value="ACI33718.1"/>
    <property type="molecule type" value="mRNA"/>
</dbReference>
<dbReference type="RefSeq" id="NP_001133697.1">
    <property type="nucleotide sequence ID" value="NM_001140225.1"/>
</dbReference>
<dbReference type="SMR" id="B5X337"/>
<dbReference type="STRING" id="8030.ENSSSAP00000036679"/>
<dbReference type="GlyCosmos" id="B5X337">
    <property type="glycosylation" value="1 site, No reported glycans"/>
</dbReference>
<dbReference type="PaxDb" id="8030-ENSSSAP00000036679"/>
<dbReference type="Ensembl" id="ENSSSAT00070009783">
    <property type="protein sequence ID" value="ENSSSAP00070009210"/>
    <property type="gene ID" value="ENSSSAG00070006391"/>
</dbReference>
<dbReference type="GeneID" id="100195196"/>
<dbReference type="KEGG" id="sasa:100195196"/>
<dbReference type="CTD" id="556770"/>
<dbReference type="OMA" id="PMCRITA"/>
<dbReference type="OrthoDB" id="288986at7898"/>
<dbReference type="Proteomes" id="UP000087266">
    <property type="component" value="Chromosome ssa21"/>
</dbReference>
<dbReference type="GO" id="GO:0005886">
    <property type="term" value="C:plasma membrane"/>
    <property type="evidence" value="ECO:0000250"/>
    <property type="project" value="UniProtKB"/>
</dbReference>
<dbReference type="GO" id="GO:0004930">
    <property type="term" value="F:G protein-coupled receptor activity"/>
    <property type="evidence" value="ECO:0000250"/>
    <property type="project" value="UniProtKB"/>
</dbReference>
<dbReference type="GO" id="GO:0008142">
    <property type="term" value="F:oxysterol binding"/>
    <property type="evidence" value="ECO:0000250"/>
    <property type="project" value="UniProtKB"/>
</dbReference>
<dbReference type="GO" id="GO:0002250">
    <property type="term" value="P:adaptive immune response"/>
    <property type="evidence" value="ECO:0000250"/>
    <property type="project" value="UniProtKB"/>
</dbReference>
<dbReference type="GO" id="GO:0002407">
    <property type="term" value="P:dendritic cell chemotaxis"/>
    <property type="evidence" value="ECO:0000250"/>
    <property type="project" value="UniProtKB"/>
</dbReference>
<dbReference type="GO" id="GO:0036145">
    <property type="term" value="P:dendritic cell homeostasis"/>
    <property type="evidence" value="ECO:0000250"/>
    <property type="project" value="UniProtKB"/>
</dbReference>
<dbReference type="GO" id="GO:0007186">
    <property type="term" value="P:G protein-coupled receptor signaling pathway"/>
    <property type="evidence" value="ECO:0000250"/>
    <property type="project" value="UniProtKB"/>
</dbReference>
<dbReference type="GO" id="GO:0030595">
    <property type="term" value="P:leukocyte chemotaxis"/>
    <property type="evidence" value="ECO:0000250"/>
    <property type="project" value="UniProtKB"/>
</dbReference>
<dbReference type="GO" id="GO:0030316">
    <property type="term" value="P:osteoclast differentiation"/>
    <property type="evidence" value="ECO:0000250"/>
    <property type="project" value="UniProtKB"/>
</dbReference>
<dbReference type="GO" id="GO:0070374">
    <property type="term" value="P:positive regulation of ERK1 and ERK2 cascade"/>
    <property type="evidence" value="ECO:0000250"/>
    <property type="project" value="UniProtKB"/>
</dbReference>
<dbReference type="GO" id="GO:2000458">
    <property type="term" value="P:regulation of astrocyte chemotaxis"/>
    <property type="evidence" value="ECO:0000250"/>
    <property type="project" value="UniProtKB"/>
</dbReference>
<dbReference type="GO" id="GO:0010818">
    <property type="term" value="P:T cell chemotaxis"/>
    <property type="evidence" value="ECO:0000250"/>
    <property type="project" value="UniProtKB"/>
</dbReference>
<dbReference type="GO" id="GO:0061470">
    <property type="term" value="P:T follicular helper cell differentiation"/>
    <property type="evidence" value="ECO:0000250"/>
    <property type="project" value="UniProtKB"/>
</dbReference>
<dbReference type="CDD" id="cd15159">
    <property type="entry name" value="7tmA_EBI2"/>
    <property type="match status" value="1"/>
</dbReference>
<dbReference type="FunFam" id="1.20.1070.10:FF:000017">
    <property type="entry name" value="lysophosphatidic acid receptor 4"/>
    <property type="match status" value="1"/>
</dbReference>
<dbReference type="Gene3D" id="1.20.1070.10">
    <property type="entry name" value="Rhodopsin 7-helix transmembrane proteins"/>
    <property type="match status" value="1"/>
</dbReference>
<dbReference type="InterPro" id="IPR047160">
    <property type="entry name" value="GP183-like"/>
</dbReference>
<dbReference type="InterPro" id="IPR000276">
    <property type="entry name" value="GPCR_Rhodpsn"/>
</dbReference>
<dbReference type="InterPro" id="IPR017452">
    <property type="entry name" value="GPCR_Rhodpsn_7TM"/>
</dbReference>
<dbReference type="PANTHER" id="PTHR24237">
    <property type="entry name" value="G-PROTEIN COUPLED RECEPTOR"/>
    <property type="match status" value="1"/>
</dbReference>
<dbReference type="PANTHER" id="PTHR24237:SF7">
    <property type="entry name" value="G-PROTEIN COUPLED RECEPTOR 183"/>
    <property type="match status" value="1"/>
</dbReference>
<dbReference type="Pfam" id="PF00001">
    <property type="entry name" value="7tm_1"/>
    <property type="match status" value="1"/>
</dbReference>
<dbReference type="PRINTS" id="PR00237">
    <property type="entry name" value="GPCRRHODOPSN"/>
</dbReference>
<dbReference type="PRINTS" id="PR01157">
    <property type="entry name" value="P2YPURNOCPTR"/>
</dbReference>
<dbReference type="SUPFAM" id="SSF81321">
    <property type="entry name" value="Family A G protein-coupled receptor-like"/>
    <property type="match status" value="1"/>
</dbReference>
<dbReference type="PROSITE" id="PS00237">
    <property type="entry name" value="G_PROTEIN_RECEP_F1_1"/>
    <property type="match status" value="1"/>
</dbReference>
<dbReference type="PROSITE" id="PS50262">
    <property type="entry name" value="G_PROTEIN_RECEP_F1_2"/>
    <property type="match status" value="1"/>
</dbReference>
<protein>
    <recommendedName>
        <fullName>G-protein coupled receptor 183</fullName>
    </recommendedName>
</protein>